<protein>
    <recommendedName>
        <fullName evidence="1">DNA mismatch repair protein MutL</fullName>
    </recommendedName>
</protein>
<feature type="chain" id="PRO_1000009972" description="DNA mismatch repair protein MutL">
    <location>
        <begin position="1"/>
        <end position="622"/>
    </location>
</feature>
<feature type="region of interest" description="Disordered" evidence="2">
    <location>
        <begin position="376"/>
        <end position="401"/>
    </location>
</feature>
<name>MUTL_AERHH</name>
<dbReference type="EMBL" id="CP000462">
    <property type="protein sequence ID" value="ABK36247.1"/>
    <property type="molecule type" value="Genomic_DNA"/>
</dbReference>
<dbReference type="RefSeq" id="WP_011704862.1">
    <property type="nucleotide sequence ID" value="NC_008570.1"/>
</dbReference>
<dbReference type="RefSeq" id="YP_855465.1">
    <property type="nucleotide sequence ID" value="NC_008570.1"/>
</dbReference>
<dbReference type="SMR" id="A0KGR9"/>
<dbReference type="STRING" id="380703.AHA_0922"/>
<dbReference type="EnsemblBacteria" id="ABK36247">
    <property type="protein sequence ID" value="ABK36247"/>
    <property type="gene ID" value="AHA_0922"/>
</dbReference>
<dbReference type="GeneID" id="4488408"/>
<dbReference type="KEGG" id="aha:AHA_0922"/>
<dbReference type="PATRIC" id="fig|380703.7.peg.922"/>
<dbReference type="eggNOG" id="COG0323">
    <property type="taxonomic scope" value="Bacteria"/>
</dbReference>
<dbReference type="HOGENOM" id="CLU_004131_5_1_6"/>
<dbReference type="OrthoDB" id="9763467at2"/>
<dbReference type="Proteomes" id="UP000000756">
    <property type="component" value="Chromosome"/>
</dbReference>
<dbReference type="GO" id="GO:0032300">
    <property type="term" value="C:mismatch repair complex"/>
    <property type="evidence" value="ECO:0007669"/>
    <property type="project" value="InterPro"/>
</dbReference>
<dbReference type="GO" id="GO:0005524">
    <property type="term" value="F:ATP binding"/>
    <property type="evidence" value="ECO:0007669"/>
    <property type="project" value="InterPro"/>
</dbReference>
<dbReference type="GO" id="GO:0016887">
    <property type="term" value="F:ATP hydrolysis activity"/>
    <property type="evidence" value="ECO:0007669"/>
    <property type="project" value="InterPro"/>
</dbReference>
<dbReference type="GO" id="GO:0140664">
    <property type="term" value="F:ATP-dependent DNA damage sensor activity"/>
    <property type="evidence" value="ECO:0007669"/>
    <property type="project" value="InterPro"/>
</dbReference>
<dbReference type="GO" id="GO:0030983">
    <property type="term" value="F:mismatched DNA binding"/>
    <property type="evidence" value="ECO:0007669"/>
    <property type="project" value="InterPro"/>
</dbReference>
<dbReference type="GO" id="GO:0006298">
    <property type="term" value="P:mismatch repair"/>
    <property type="evidence" value="ECO:0007669"/>
    <property type="project" value="UniProtKB-UniRule"/>
</dbReference>
<dbReference type="CDD" id="cd16926">
    <property type="entry name" value="HATPase_MutL-MLH-PMS-like"/>
    <property type="match status" value="1"/>
</dbReference>
<dbReference type="CDD" id="cd03482">
    <property type="entry name" value="MutL_Trans_MutL"/>
    <property type="match status" value="1"/>
</dbReference>
<dbReference type="FunFam" id="3.30.230.10:FF:000013">
    <property type="entry name" value="DNA mismatch repair endonuclease MutL"/>
    <property type="match status" value="1"/>
</dbReference>
<dbReference type="FunFam" id="3.30.565.10:FF:000003">
    <property type="entry name" value="DNA mismatch repair endonuclease MutL"/>
    <property type="match status" value="1"/>
</dbReference>
<dbReference type="Gene3D" id="3.30.230.10">
    <property type="match status" value="1"/>
</dbReference>
<dbReference type="Gene3D" id="3.30.565.10">
    <property type="entry name" value="Histidine kinase-like ATPase, C-terminal domain"/>
    <property type="match status" value="1"/>
</dbReference>
<dbReference type="Gene3D" id="3.30.1540.20">
    <property type="entry name" value="MutL, C-terminal domain, dimerisation subdomain"/>
    <property type="match status" value="1"/>
</dbReference>
<dbReference type="Gene3D" id="3.30.1370.100">
    <property type="entry name" value="MutL, C-terminal domain, regulatory subdomain"/>
    <property type="match status" value="1"/>
</dbReference>
<dbReference type="HAMAP" id="MF_00149">
    <property type="entry name" value="DNA_mis_repair"/>
    <property type="match status" value="1"/>
</dbReference>
<dbReference type="InterPro" id="IPR014762">
    <property type="entry name" value="DNA_mismatch_repair_CS"/>
</dbReference>
<dbReference type="InterPro" id="IPR020667">
    <property type="entry name" value="DNA_mismatch_repair_MutL"/>
</dbReference>
<dbReference type="InterPro" id="IPR013507">
    <property type="entry name" value="DNA_mismatch_S5_2-like"/>
</dbReference>
<dbReference type="InterPro" id="IPR036890">
    <property type="entry name" value="HATPase_C_sf"/>
</dbReference>
<dbReference type="InterPro" id="IPR002099">
    <property type="entry name" value="MutL/Mlh/PMS"/>
</dbReference>
<dbReference type="InterPro" id="IPR038973">
    <property type="entry name" value="MutL/Mlh/Pms-like"/>
</dbReference>
<dbReference type="InterPro" id="IPR014790">
    <property type="entry name" value="MutL_C"/>
</dbReference>
<dbReference type="InterPro" id="IPR042120">
    <property type="entry name" value="MutL_C_dimsub"/>
</dbReference>
<dbReference type="InterPro" id="IPR042121">
    <property type="entry name" value="MutL_C_regsub"/>
</dbReference>
<dbReference type="InterPro" id="IPR037198">
    <property type="entry name" value="MutL_C_sf"/>
</dbReference>
<dbReference type="InterPro" id="IPR020568">
    <property type="entry name" value="Ribosomal_Su5_D2-typ_SF"/>
</dbReference>
<dbReference type="InterPro" id="IPR014721">
    <property type="entry name" value="Ribsml_uS5_D2-typ_fold_subgr"/>
</dbReference>
<dbReference type="NCBIfam" id="TIGR00585">
    <property type="entry name" value="mutl"/>
    <property type="match status" value="1"/>
</dbReference>
<dbReference type="NCBIfam" id="NF000948">
    <property type="entry name" value="PRK00095.1-1"/>
    <property type="match status" value="1"/>
</dbReference>
<dbReference type="PANTHER" id="PTHR10073">
    <property type="entry name" value="DNA MISMATCH REPAIR PROTEIN MLH, PMS, MUTL"/>
    <property type="match status" value="1"/>
</dbReference>
<dbReference type="PANTHER" id="PTHR10073:SF12">
    <property type="entry name" value="DNA MISMATCH REPAIR PROTEIN MLH1"/>
    <property type="match status" value="1"/>
</dbReference>
<dbReference type="Pfam" id="PF01119">
    <property type="entry name" value="DNA_mis_repair"/>
    <property type="match status" value="1"/>
</dbReference>
<dbReference type="Pfam" id="PF13589">
    <property type="entry name" value="HATPase_c_3"/>
    <property type="match status" value="1"/>
</dbReference>
<dbReference type="Pfam" id="PF08676">
    <property type="entry name" value="MutL_C"/>
    <property type="match status" value="1"/>
</dbReference>
<dbReference type="SMART" id="SM01340">
    <property type="entry name" value="DNA_mis_repair"/>
    <property type="match status" value="1"/>
</dbReference>
<dbReference type="SMART" id="SM00853">
    <property type="entry name" value="MutL_C"/>
    <property type="match status" value="1"/>
</dbReference>
<dbReference type="SUPFAM" id="SSF55874">
    <property type="entry name" value="ATPase domain of HSP90 chaperone/DNA topoisomerase II/histidine kinase"/>
    <property type="match status" value="1"/>
</dbReference>
<dbReference type="SUPFAM" id="SSF118116">
    <property type="entry name" value="DNA mismatch repair protein MutL"/>
    <property type="match status" value="1"/>
</dbReference>
<dbReference type="SUPFAM" id="SSF54211">
    <property type="entry name" value="Ribosomal protein S5 domain 2-like"/>
    <property type="match status" value="1"/>
</dbReference>
<dbReference type="PROSITE" id="PS00058">
    <property type="entry name" value="DNA_MISMATCH_REPAIR_1"/>
    <property type="match status" value="1"/>
</dbReference>
<organism>
    <name type="scientific">Aeromonas hydrophila subsp. hydrophila (strain ATCC 7966 / DSM 30187 / BCRC 13018 / CCUG 14551 / JCM 1027 / KCTC 2358 / NCIMB 9240 / NCTC 8049)</name>
    <dbReference type="NCBI Taxonomy" id="380703"/>
    <lineage>
        <taxon>Bacteria</taxon>
        <taxon>Pseudomonadati</taxon>
        <taxon>Pseudomonadota</taxon>
        <taxon>Gammaproteobacteria</taxon>
        <taxon>Aeromonadales</taxon>
        <taxon>Aeromonadaceae</taxon>
        <taxon>Aeromonas</taxon>
    </lineage>
</organism>
<proteinExistence type="inferred from homology"/>
<reference key="1">
    <citation type="journal article" date="2006" name="J. Bacteriol.">
        <title>Genome sequence of Aeromonas hydrophila ATCC 7966T: jack of all trades.</title>
        <authorList>
            <person name="Seshadri R."/>
            <person name="Joseph S.W."/>
            <person name="Chopra A.K."/>
            <person name="Sha J."/>
            <person name="Shaw J."/>
            <person name="Graf J."/>
            <person name="Haft D.H."/>
            <person name="Wu M."/>
            <person name="Ren Q."/>
            <person name="Rosovitz M.J."/>
            <person name="Madupu R."/>
            <person name="Tallon L."/>
            <person name="Kim M."/>
            <person name="Jin S."/>
            <person name="Vuong H."/>
            <person name="Stine O.C."/>
            <person name="Ali A."/>
            <person name="Horneman A.J."/>
            <person name="Heidelberg J.F."/>
        </authorList>
    </citation>
    <scope>NUCLEOTIDE SEQUENCE [LARGE SCALE GENOMIC DNA]</scope>
    <source>
        <strain>ATCC 7966 / DSM 30187 / BCRC 13018 / CCUG 14551 / JCM 1027 / KCTC 2358 / NCIMB 9240 / NCTC 8049</strain>
    </source>
</reference>
<comment type="function">
    <text evidence="1">This protein is involved in the repair of mismatches in DNA. It is required for dam-dependent methyl-directed DNA mismatch repair. May act as a 'molecular matchmaker', a protein that promotes the formation of a stable complex between two or more DNA-binding proteins in an ATP-dependent manner without itself being part of a final effector complex.</text>
</comment>
<comment type="similarity">
    <text evidence="1">Belongs to the DNA mismatch repair MutL/HexB family.</text>
</comment>
<gene>
    <name evidence="1" type="primary">mutL</name>
    <name type="ordered locus">AHA_0922</name>
</gene>
<evidence type="ECO:0000255" key="1">
    <source>
        <dbReference type="HAMAP-Rule" id="MF_00149"/>
    </source>
</evidence>
<evidence type="ECO:0000256" key="2">
    <source>
        <dbReference type="SAM" id="MobiDB-lite"/>
    </source>
</evidence>
<accession>A0KGR9</accession>
<keyword id="KW-0227">DNA damage</keyword>
<keyword id="KW-0234">DNA repair</keyword>
<keyword id="KW-1185">Reference proteome</keyword>
<sequence>MPIRILPPILANQIAAGEVVERPSSVVKELVENSLDAGADRVEIDIDKGGAKLIRIRDNGSGVAKDELVLALSRHATSKVATLDDLEGINSLGFRGEALASISSVSRLTFTSRTAEQSEAWQAQAEGREMSVTIKPAAHPVGTTVEVVDLFFNTPARRKFMRSEKTEFAHIDELVRRIALSRFDVTLILRHNGKVVRQYKAANTVAEQERRLAAVCGSPFMHYALAVESEHSDVRLWGWLATPEGARPQNDLQYTYVNGRMMRDKLINHAIRQAYDELLPADRFAAYVLYIELDPRQVDVNVHPAKHEVRFHQARLIHDFIFQALFTALRQQGAASDEPLAETLVELPVSAPIEYPGQAPRAEWYGAEHNYRAPAREVREGSSTGRAGNYQPPEPPSREAMRGMGSLLTTLPAVQGTPLAEAETAPVAAAVPAKAGAWRALTLVEQAYLLLERDNRLALLSLVRAERLLLRHWLLETWGQGLAAQPLLLPVSFKLPKNLVALVEQQDRLLKRMGLELKSGGRDTMILTRVPALLRQTDLVRLLPELLQLIESGSDSDAGQQAEVLCQWLVEQGISREKVYDFATANRLLTELVADFSDQLANVRMVRPLALASVLAEFADGH</sequence>